<evidence type="ECO:0000250" key="1"/>
<evidence type="ECO:0000305" key="2"/>
<sequence length="90" mass="10501">MGELPYKIQELKLRRIEELNNKLRNELARERMTASNACLSIIDYTSTHKDYAVPEVWGYPMVGENPYNNTMRKNNFARSHEETSACCTIM</sequence>
<protein>
    <recommendedName>
        <fullName>Guanine nucleotide-binding protein subunit gamma</fullName>
    </recommendedName>
</protein>
<keyword id="KW-0449">Lipoprotein</keyword>
<keyword id="KW-0472">Membrane</keyword>
<keyword id="KW-0488">Methylation</keyword>
<keyword id="KW-0564">Palmitate</keyword>
<keyword id="KW-0636">Prenylation</keyword>
<keyword id="KW-1185">Reference proteome</keyword>
<keyword id="KW-0807">Transducer</keyword>
<feature type="chain" id="PRO_0000194807" description="Guanine nucleotide-binding protein subunit gamma">
    <location>
        <begin position="1"/>
        <end position="87"/>
    </location>
</feature>
<feature type="propeptide" id="PRO_0000396770" description="Removed in mature form" evidence="1">
    <location>
        <begin position="88"/>
        <end position="90"/>
    </location>
</feature>
<feature type="modified residue" description="Cysteine methyl ester" evidence="1">
    <location>
        <position position="87"/>
    </location>
</feature>
<feature type="lipid moiety-binding region" description="S-palmitoyl cysteine" evidence="1">
    <location>
        <position position="86"/>
    </location>
</feature>
<feature type="lipid moiety-binding region" description="S-farnesyl cysteine" evidence="1">
    <location>
        <position position="87"/>
    </location>
</feature>
<comment type="subunit">
    <text>G proteins are composed of 3 units, alpha, beta and gamma.</text>
</comment>
<comment type="subcellular location">
    <subcellularLocation>
        <location evidence="1">Membrane</location>
        <topology evidence="1">Peripheral membrane protein</topology>
    </subcellularLocation>
</comment>
<comment type="similarity">
    <text evidence="2">Belongs to the G protein gamma family.</text>
</comment>
<reference key="1">
    <citation type="journal article" date="2004" name="Nature">
        <title>Genome evolution in yeasts.</title>
        <authorList>
            <person name="Dujon B."/>
            <person name="Sherman D."/>
            <person name="Fischer G."/>
            <person name="Durrens P."/>
            <person name="Casaregola S."/>
            <person name="Lafontaine I."/>
            <person name="de Montigny J."/>
            <person name="Marck C."/>
            <person name="Neuveglise C."/>
            <person name="Talla E."/>
            <person name="Goffard N."/>
            <person name="Frangeul L."/>
            <person name="Aigle M."/>
            <person name="Anthouard V."/>
            <person name="Babour A."/>
            <person name="Barbe V."/>
            <person name="Barnay S."/>
            <person name="Blanchin S."/>
            <person name="Beckerich J.-M."/>
            <person name="Beyne E."/>
            <person name="Bleykasten C."/>
            <person name="Boisrame A."/>
            <person name="Boyer J."/>
            <person name="Cattolico L."/>
            <person name="Confanioleri F."/>
            <person name="de Daruvar A."/>
            <person name="Despons L."/>
            <person name="Fabre E."/>
            <person name="Fairhead C."/>
            <person name="Ferry-Dumazet H."/>
            <person name="Groppi A."/>
            <person name="Hantraye F."/>
            <person name="Hennequin C."/>
            <person name="Jauniaux N."/>
            <person name="Joyet P."/>
            <person name="Kachouri R."/>
            <person name="Kerrest A."/>
            <person name="Koszul R."/>
            <person name="Lemaire M."/>
            <person name="Lesur I."/>
            <person name="Ma L."/>
            <person name="Muller H."/>
            <person name="Nicaud J.-M."/>
            <person name="Nikolski M."/>
            <person name="Oztas S."/>
            <person name="Ozier-Kalogeropoulos O."/>
            <person name="Pellenz S."/>
            <person name="Potier S."/>
            <person name="Richard G.-F."/>
            <person name="Straub M.-L."/>
            <person name="Suleau A."/>
            <person name="Swennen D."/>
            <person name="Tekaia F."/>
            <person name="Wesolowski-Louvel M."/>
            <person name="Westhof E."/>
            <person name="Wirth B."/>
            <person name="Zeniou-Meyer M."/>
            <person name="Zivanovic Y."/>
            <person name="Bolotin-Fukuhara M."/>
            <person name="Thierry A."/>
            <person name="Bouchier C."/>
            <person name="Caudron B."/>
            <person name="Scarpelli C."/>
            <person name="Gaillardin C."/>
            <person name="Weissenbach J."/>
            <person name="Wincker P."/>
            <person name="Souciet J.-L."/>
        </authorList>
    </citation>
    <scope>NUCLEOTIDE SEQUENCE [LARGE SCALE GENOMIC DNA]</scope>
    <source>
        <strain>ATCC 8585 / CBS 2359 / DSM 70799 / NBRC 1267 / NRRL Y-1140 / WM37</strain>
    </source>
</reference>
<accession>Q6CPB4</accession>
<name>GBG_KLULA</name>
<proteinExistence type="inferred from homology"/>
<dbReference type="EMBL" id="CR382125">
    <property type="protein sequence ID" value="CAG99312.1"/>
    <property type="molecule type" value="Genomic_DNA"/>
</dbReference>
<dbReference type="RefSeq" id="XP_454225.1">
    <property type="nucleotide sequence ID" value="XM_454225.1"/>
</dbReference>
<dbReference type="SMR" id="Q6CPB4"/>
<dbReference type="FunCoup" id="Q6CPB4">
    <property type="interactions" value="115"/>
</dbReference>
<dbReference type="STRING" id="284590.Q6CPB4"/>
<dbReference type="PaxDb" id="284590-Q6CPB4"/>
<dbReference type="KEGG" id="kla:KLLA0_E06183g"/>
<dbReference type="eggNOG" id="ENOG502S5Z5">
    <property type="taxonomic scope" value="Eukaryota"/>
</dbReference>
<dbReference type="HOGENOM" id="CLU_163540_0_0_1"/>
<dbReference type="InParanoid" id="Q6CPB4"/>
<dbReference type="OMA" id="CLTIINY"/>
<dbReference type="Proteomes" id="UP000000598">
    <property type="component" value="Chromosome E"/>
</dbReference>
<dbReference type="GO" id="GO:0005834">
    <property type="term" value="C:heterotrimeric G-protein complex"/>
    <property type="evidence" value="ECO:0007669"/>
    <property type="project" value="TreeGrafter"/>
</dbReference>
<dbReference type="GO" id="GO:0031681">
    <property type="term" value="F:G-protein beta-subunit binding"/>
    <property type="evidence" value="ECO:0007669"/>
    <property type="project" value="InterPro"/>
</dbReference>
<dbReference type="GO" id="GO:0007186">
    <property type="term" value="P:G protein-coupled receptor signaling pathway"/>
    <property type="evidence" value="ECO:0007669"/>
    <property type="project" value="InterPro"/>
</dbReference>
<dbReference type="GO" id="GO:0000750">
    <property type="term" value="P:pheromone-dependent signal transduction involved in conjugation with cellular fusion"/>
    <property type="evidence" value="ECO:0007669"/>
    <property type="project" value="InterPro"/>
</dbReference>
<dbReference type="FunFam" id="4.10.260.10:FF:000003">
    <property type="entry name" value="G-protein complex gamma subunit Ste18/GpgA"/>
    <property type="match status" value="1"/>
</dbReference>
<dbReference type="Gene3D" id="4.10.260.10">
    <property type="entry name" value="Transducin (heterotrimeric G protein), gamma chain"/>
    <property type="match status" value="1"/>
</dbReference>
<dbReference type="InterPro" id="IPR015898">
    <property type="entry name" value="G-protein_gamma-like_dom"/>
</dbReference>
<dbReference type="InterPro" id="IPR036284">
    <property type="entry name" value="GGL_sf"/>
</dbReference>
<dbReference type="InterPro" id="IPR041848">
    <property type="entry name" value="Ste18_fungal"/>
</dbReference>
<dbReference type="PANTHER" id="PTHR28189">
    <property type="entry name" value="GUANINE NUCLEOTIDE-BINDING PROTEIN SUBUNIT GAMMA"/>
    <property type="match status" value="1"/>
</dbReference>
<dbReference type="PANTHER" id="PTHR28189:SF1">
    <property type="entry name" value="GUANINE NUCLEOTIDE-BINDING PROTEIN SUBUNIT GAMMA"/>
    <property type="match status" value="1"/>
</dbReference>
<dbReference type="Pfam" id="PF00631">
    <property type="entry name" value="G-gamma"/>
    <property type="match status" value="1"/>
</dbReference>
<dbReference type="SMART" id="SM01224">
    <property type="entry name" value="G_gamma"/>
    <property type="match status" value="1"/>
</dbReference>
<dbReference type="SMART" id="SM00224">
    <property type="entry name" value="GGL"/>
    <property type="match status" value="1"/>
</dbReference>
<gene>
    <name type="ordered locus">KLLA0E06138g</name>
</gene>
<organism>
    <name type="scientific">Kluyveromyces lactis (strain ATCC 8585 / CBS 2359 / DSM 70799 / NBRC 1267 / NRRL Y-1140 / WM37)</name>
    <name type="common">Yeast</name>
    <name type="synonym">Candida sphaerica</name>
    <dbReference type="NCBI Taxonomy" id="284590"/>
    <lineage>
        <taxon>Eukaryota</taxon>
        <taxon>Fungi</taxon>
        <taxon>Dikarya</taxon>
        <taxon>Ascomycota</taxon>
        <taxon>Saccharomycotina</taxon>
        <taxon>Saccharomycetes</taxon>
        <taxon>Saccharomycetales</taxon>
        <taxon>Saccharomycetaceae</taxon>
        <taxon>Kluyveromyces</taxon>
    </lineage>
</organism>